<evidence type="ECO:0000255" key="1">
    <source>
        <dbReference type="HAMAP-Rule" id="MF_00226"/>
    </source>
</evidence>
<organism>
    <name type="scientific">Geobacillus sp. (strain WCH70)</name>
    <dbReference type="NCBI Taxonomy" id="471223"/>
    <lineage>
        <taxon>Bacteria</taxon>
        <taxon>Bacillati</taxon>
        <taxon>Bacillota</taxon>
        <taxon>Bacilli</taxon>
        <taxon>Bacillales</taxon>
        <taxon>Anoxybacillaceae</taxon>
        <taxon>Geobacillus</taxon>
    </lineage>
</organism>
<gene>
    <name evidence="1" type="primary">cinA</name>
    <name type="ordered locus">GWCH70_1187</name>
</gene>
<feature type="chain" id="PRO_1000204327" description="Putative competence-damage inducible protein">
    <location>
        <begin position="1"/>
        <end position="416"/>
    </location>
</feature>
<dbReference type="EMBL" id="CP001638">
    <property type="protein sequence ID" value="ACS24047.1"/>
    <property type="molecule type" value="Genomic_DNA"/>
</dbReference>
<dbReference type="SMR" id="C5D9G1"/>
<dbReference type="STRING" id="471223.GWCH70_1187"/>
<dbReference type="KEGG" id="gwc:GWCH70_1187"/>
<dbReference type="eggNOG" id="COG1058">
    <property type="taxonomic scope" value="Bacteria"/>
</dbReference>
<dbReference type="eggNOG" id="COG1546">
    <property type="taxonomic scope" value="Bacteria"/>
</dbReference>
<dbReference type="HOGENOM" id="CLU_030805_9_3_9"/>
<dbReference type="OrthoDB" id="9801454at2"/>
<dbReference type="CDD" id="cd00885">
    <property type="entry name" value="cinA"/>
    <property type="match status" value="1"/>
</dbReference>
<dbReference type="Gene3D" id="3.30.70.2860">
    <property type="match status" value="1"/>
</dbReference>
<dbReference type="Gene3D" id="3.90.950.20">
    <property type="entry name" value="CinA-like"/>
    <property type="match status" value="1"/>
</dbReference>
<dbReference type="Gene3D" id="3.40.980.10">
    <property type="entry name" value="MoaB/Mog-like domain"/>
    <property type="match status" value="1"/>
</dbReference>
<dbReference type="HAMAP" id="MF_00226_B">
    <property type="entry name" value="CinA_B"/>
    <property type="match status" value="1"/>
</dbReference>
<dbReference type="InterPro" id="IPR050101">
    <property type="entry name" value="CinA"/>
</dbReference>
<dbReference type="InterPro" id="IPR036653">
    <property type="entry name" value="CinA-like_C"/>
</dbReference>
<dbReference type="InterPro" id="IPR008136">
    <property type="entry name" value="CinA_C"/>
</dbReference>
<dbReference type="InterPro" id="IPR041424">
    <property type="entry name" value="CinA_KH"/>
</dbReference>
<dbReference type="InterPro" id="IPR008135">
    <property type="entry name" value="Competence-induced_CinA"/>
</dbReference>
<dbReference type="InterPro" id="IPR036425">
    <property type="entry name" value="MoaB/Mog-like_dom_sf"/>
</dbReference>
<dbReference type="InterPro" id="IPR001453">
    <property type="entry name" value="MoaB/Mog_dom"/>
</dbReference>
<dbReference type="NCBIfam" id="TIGR00200">
    <property type="entry name" value="cinA_nterm"/>
    <property type="match status" value="1"/>
</dbReference>
<dbReference type="NCBIfam" id="TIGR00177">
    <property type="entry name" value="molyb_syn"/>
    <property type="match status" value="1"/>
</dbReference>
<dbReference type="NCBIfam" id="TIGR00199">
    <property type="entry name" value="PncC_domain"/>
    <property type="match status" value="1"/>
</dbReference>
<dbReference type="NCBIfam" id="NF001813">
    <property type="entry name" value="PRK00549.1"/>
    <property type="match status" value="1"/>
</dbReference>
<dbReference type="PANTHER" id="PTHR13939">
    <property type="entry name" value="NICOTINAMIDE-NUCLEOTIDE AMIDOHYDROLASE PNCC"/>
    <property type="match status" value="1"/>
</dbReference>
<dbReference type="PANTHER" id="PTHR13939:SF0">
    <property type="entry name" value="NMN AMIDOHYDROLASE-LIKE PROTEIN YFAY"/>
    <property type="match status" value="1"/>
</dbReference>
<dbReference type="Pfam" id="PF02464">
    <property type="entry name" value="CinA"/>
    <property type="match status" value="1"/>
</dbReference>
<dbReference type="Pfam" id="PF18146">
    <property type="entry name" value="CinA_KH"/>
    <property type="match status" value="1"/>
</dbReference>
<dbReference type="Pfam" id="PF00994">
    <property type="entry name" value="MoCF_biosynth"/>
    <property type="match status" value="1"/>
</dbReference>
<dbReference type="PIRSF" id="PIRSF006728">
    <property type="entry name" value="CinA"/>
    <property type="match status" value="1"/>
</dbReference>
<dbReference type="SMART" id="SM00852">
    <property type="entry name" value="MoCF_biosynth"/>
    <property type="match status" value="1"/>
</dbReference>
<dbReference type="SUPFAM" id="SSF142433">
    <property type="entry name" value="CinA-like"/>
    <property type="match status" value="1"/>
</dbReference>
<dbReference type="SUPFAM" id="SSF53218">
    <property type="entry name" value="Molybdenum cofactor biosynthesis proteins"/>
    <property type="match status" value="1"/>
</dbReference>
<comment type="similarity">
    <text evidence="1">Belongs to the CinA family.</text>
</comment>
<accession>C5D9G1</accession>
<protein>
    <recommendedName>
        <fullName evidence="1">Putative competence-damage inducible protein</fullName>
    </recommendedName>
</protein>
<proteinExistence type="inferred from homology"/>
<reference key="1">
    <citation type="submission" date="2009-06" db="EMBL/GenBank/DDBJ databases">
        <title>Complete sequence of chromosome of Geopacillus sp. WCH70.</title>
        <authorList>
            <consortium name="US DOE Joint Genome Institute"/>
            <person name="Lucas S."/>
            <person name="Copeland A."/>
            <person name="Lapidus A."/>
            <person name="Glavina del Rio T."/>
            <person name="Dalin E."/>
            <person name="Tice H."/>
            <person name="Bruce D."/>
            <person name="Goodwin L."/>
            <person name="Pitluck S."/>
            <person name="Chertkov O."/>
            <person name="Brettin T."/>
            <person name="Detter J.C."/>
            <person name="Han C."/>
            <person name="Larimer F."/>
            <person name="Land M."/>
            <person name="Hauser L."/>
            <person name="Kyrpides N."/>
            <person name="Mikhailova N."/>
            <person name="Brumm P."/>
            <person name="Mead D.A."/>
            <person name="Richardson P."/>
        </authorList>
    </citation>
    <scope>NUCLEOTIDE SEQUENCE [LARGE SCALE GENOMIC DNA]</scope>
    <source>
        <strain>WCH70</strain>
    </source>
</reference>
<sequence>MNAEIIAVGSELLLGQIANTNAQFLSEKLAELGINVYFHTVVGDNAGRLEQAVRVAQARAELIIFTGGLGPTKDDLTKETIARLLGRELVIDEEALRSIEAYFARTNRTMTENNKKQALVLQGSTILKNEHGMAPGMAITLNSITYMLLPGPPKEMQPMFLKYGRPFLMEQLGRHERIESRVLRFFGIGESQLETDIEDLIDQQSNPTIAPLAGDGEVALRLTAKHHSEIEAKKLLDKAEQAILERVGRYFYGYNDETLFKKTVKMLKEKKKTIAAAESLTGGLFLTELTAIPGASQVVRGGVVCYANEVKEKVLHVPASVLTTDGAVSERCAQLLAENVRTLCHADIGISFTGVAGPDPLEGKPVGTVYIGISTPENETEVYALALPGQRDAIRIRTAKYGCSIILKKLAAAYEG</sequence>
<name>CINA_GEOSW</name>